<reference key="1">
    <citation type="journal article" date="1995" name="Plant Mol. Biol. Rep.">
        <title>The chloroplast genome of a chlorophyll a+c-containing alga, Odontella sinensis.</title>
        <authorList>
            <person name="Kowallik K.V."/>
            <person name="Stoebe B."/>
            <person name="Schaffran I."/>
            <person name="Kroth-Pancic P."/>
            <person name="Freier U."/>
        </authorList>
    </citation>
    <scope>NUCLEOTIDE SEQUENCE [LARGE SCALE GENOMIC DNA]</scope>
</reference>
<comment type="subcellular location">
    <subcellularLocation>
        <location>Plastid</location>
        <location>Chloroplast</location>
    </subcellularLocation>
</comment>
<comment type="similarity">
    <text evidence="1">Belongs to the iron-sulfur cluster assembly SufBD family.</text>
</comment>
<name>YCF24_TRICV</name>
<dbReference type="EMBL" id="Z67753">
    <property type="protein sequence ID" value="CAA91687.1"/>
    <property type="molecule type" value="Genomic_DNA"/>
</dbReference>
<dbReference type="PIR" id="S78314">
    <property type="entry name" value="S78314"/>
</dbReference>
<dbReference type="RefSeq" id="NP_043655.1">
    <property type="nucleotide sequence ID" value="NC_001713.1"/>
</dbReference>
<dbReference type="SMR" id="P49530"/>
<dbReference type="GeneID" id="801717"/>
<dbReference type="GO" id="GO:0009507">
    <property type="term" value="C:chloroplast"/>
    <property type="evidence" value="ECO:0007669"/>
    <property type="project" value="UniProtKB-SubCell"/>
</dbReference>
<dbReference type="GO" id="GO:0016226">
    <property type="term" value="P:iron-sulfur cluster assembly"/>
    <property type="evidence" value="ECO:0007669"/>
    <property type="project" value="InterPro"/>
</dbReference>
<dbReference type="InterPro" id="IPR055346">
    <property type="entry name" value="Fe-S_cluster_assembly_SufBD"/>
</dbReference>
<dbReference type="InterPro" id="IPR010231">
    <property type="entry name" value="SUF_FeS_clus_asmbl_SufB"/>
</dbReference>
<dbReference type="InterPro" id="IPR000825">
    <property type="entry name" value="SUF_FeS_clus_asmbl_SufBD_core"/>
</dbReference>
<dbReference type="InterPro" id="IPR037284">
    <property type="entry name" value="SUF_FeS_clus_asmbl_SufBD_sf"/>
</dbReference>
<dbReference type="InterPro" id="IPR045595">
    <property type="entry name" value="SufBD_N"/>
</dbReference>
<dbReference type="NCBIfam" id="NF008773">
    <property type="entry name" value="PRK11814.1"/>
    <property type="match status" value="1"/>
</dbReference>
<dbReference type="NCBIfam" id="TIGR01980">
    <property type="entry name" value="sufB"/>
    <property type="match status" value="1"/>
</dbReference>
<dbReference type="PANTHER" id="PTHR30508">
    <property type="entry name" value="FES CLUSTER ASSEMBLY PROTEIN SUF"/>
    <property type="match status" value="1"/>
</dbReference>
<dbReference type="PANTHER" id="PTHR30508:SF1">
    <property type="entry name" value="UPF0051 PROTEIN ABCI8, CHLOROPLASTIC-RELATED"/>
    <property type="match status" value="1"/>
</dbReference>
<dbReference type="Pfam" id="PF01458">
    <property type="entry name" value="SUFBD_core"/>
    <property type="match status" value="1"/>
</dbReference>
<dbReference type="Pfam" id="PF19295">
    <property type="entry name" value="SufBD_N"/>
    <property type="match status" value="1"/>
</dbReference>
<dbReference type="SUPFAM" id="SSF101960">
    <property type="entry name" value="Stabilizer of iron transporter SufD"/>
    <property type="match status" value="1"/>
</dbReference>
<geneLocation type="chloroplast"/>
<feature type="chain" id="PRO_0000147392" description="Iron-sulfur cluster assembly SufBD family protein ycf24">
    <location>
        <begin position="1"/>
        <end position="486"/>
    </location>
</feature>
<accession>P49530</accession>
<organism>
    <name type="scientific">Trieres chinensis</name>
    <name type="common">Marine centric diatom</name>
    <name type="synonym">Odontella sinensis</name>
    <dbReference type="NCBI Taxonomy" id="1514140"/>
    <lineage>
        <taxon>Eukaryota</taxon>
        <taxon>Sar</taxon>
        <taxon>Stramenopiles</taxon>
        <taxon>Ochrophyta</taxon>
        <taxon>Bacillariophyta</taxon>
        <taxon>Mediophyceae</taxon>
        <taxon>Biddulphiophycidae</taxon>
        <taxon>Eupodiscales</taxon>
        <taxon>Parodontellaceae</taxon>
        <taxon>Trieres</taxon>
    </lineage>
</organism>
<gene>
    <name type="primary">ycf24</name>
</gene>
<keyword id="KW-0150">Chloroplast</keyword>
<keyword id="KW-0934">Plastid</keyword>
<evidence type="ECO:0000305" key="1"/>
<sequence>MTNKSNKILNTNITKLVNQPYKYGFSTVIEKDIIEKGLNEDVICLISKKKNEPKFLLEFRLKAFKKWKEMKCPDWAQIKFSEIDYQDIIYYSAPKVKKKLNSLDEVDPELLKTFEKLGISLTEQKRLANVAIDAVFDSVSIATTFKEELAECGVIFSSISEAIQEYPELIEKYLGSVVPIGDNYFSALNSAVFTDGSFCYIPKDTICPLELSTYFRINDQKSGQFERTLIVAEKNSQVSYLEGCTAPQYDSNQLHAAVVELVALENADIKYSTVQNWYAGNNYGEGGIYNFVTKRGLCAGSNSKISWTQVETGSNITWKYPSCLLVGDKAKGEFYSVALTNNYQQADTGSKMIHVGKNTRSRIVSKGISAGNSKNTYRGLVNISNKAIGARNYSQCDSLLIGNLSNANTFPFISVQNPTAKIEHEASTSKIGEEQIFYFLQRGIPIEKGVELMISGFCQEVFTELPLEFAAEADRLLTLKLEGSVG</sequence>
<protein>
    <recommendedName>
        <fullName>Iron-sulfur cluster assembly SufBD family protein ycf24</fullName>
    </recommendedName>
    <alternativeName>
        <fullName>ORF486</fullName>
    </alternativeName>
</protein>
<proteinExistence type="inferred from homology"/>